<comment type="function">
    <text evidence="4">Catalyzes the condensation of (S)-aspartate-beta-semialdehyde [(S)-ASA] and pyruvate to 4-hydroxy-tetrahydrodipicolinate (HTPA).</text>
</comment>
<comment type="catalytic activity">
    <reaction evidence="1">
        <text>L-aspartate 4-semialdehyde + pyruvate = (2S,4S)-4-hydroxy-2,3,4,5-tetrahydrodipicolinate + H2O + H(+)</text>
        <dbReference type="Rhea" id="RHEA:34171"/>
        <dbReference type="ChEBI" id="CHEBI:15361"/>
        <dbReference type="ChEBI" id="CHEBI:15377"/>
        <dbReference type="ChEBI" id="CHEBI:15378"/>
        <dbReference type="ChEBI" id="CHEBI:67139"/>
        <dbReference type="ChEBI" id="CHEBI:537519"/>
        <dbReference type="EC" id="4.3.3.7"/>
    </reaction>
</comment>
<comment type="activity regulation">
    <text evidence="2">Is insensitive to lysine-feedback inhibition. Shows ASA substrate inhibition.</text>
</comment>
<comment type="biophysicochemical properties">
    <kinetics>
        <KM evidence="2">0.11 mM for pyruvate</KM>
        <KM evidence="2">0.22 mM for L-aspartate-4-semialdehyde</KM>
        <text>kcat is 70 sec(-1).</text>
    </kinetics>
</comment>
<comment type="pathway">
    <text evidence="1">Amino-acid biosynthesis; L-lysine biosynthesis via DAP pathway; (S)-tetrahydrodipicolinate from L-aspartate: step 3/4.</text>
</comment>
<comment type="subunit">
    <text evidence="1 2">Homodimer. In fact, exists in a monomer-dimer equilibrium in solution, shifted in favor of the dimer in presence of the substrate pyruvate; the monomer has significantly reduced activity compared with the dimer.</text>
</comment>
<comment type="subcellular location">
    <subcellularLocation>
        <location evidence="1">Cytoplasm</location>
    </subcellularLocation>
</comment>
<comment type="mass spectrometry" mass="32349.71" method="Electrospray" evidence="2"/>
<comment type="similarity">
    <text evidence="1">Belongs to the DapA family.</text>
</comment>
<comment type="caution">
    <text evidence="3">Was originally thought to be a dihydrodipicolinate synthase (DHDPS), catalyzing the condensation of (S)-aspartate-beta-semialdehyde [(S)-ASA] and pyruvate to dihydrodipicolinate (DHDP). However, it was shown in E.coli that the product of the enzymatic reaction is not dihydrodipicolinate but in fact (4S)-4-hydroxy-2,3,4,5-tetrahydro-(2S)-dipicolinic acid (HTPA), and that the consecutive dehydration reaction leading to DHDP is not spontaneous but catalyzed by DapB.</text>
</comment>
<keyword id="KW-0002">3D-structure</keyword>
<keyword id="KW-0028">Amino-acid biosynthesis</keyword>
<keyword id="KW-0963">Cytoplasm</keyword>
<keyword id="KW-0220">Diaminopimelate biosynthesis</keyword>
<keyword id="KW-0456">Lyase</keyword>
<keyword id="KW-0457">Lysine biosynthesis</keyword>
<keyword id="KW-0704">Schiff base</keyword>
<protein>
    <recommendedName>
        <fullName evidence="1">4-hydroxy-tetrahydrodipicolinate synthase</fullName>
        <shortName evidence="1">HTPA synthase</shortName>
        <ecNumber evidence="1">4.3.3.7</ecNumber>
    </recommendedName>
</protein>
<organism>
    <name type="scientific">Staphylococcus aureus (strain MRSA252)</name>
    <dbReference type="NCBI Taxonomy" id="282458"/>
    <lineage>
        <taxon>Bacteria</taxon>
        <taxon>Bacillati</taxon>
        <taxon>Bacillota</taxon>
        <taxon>Bacilli</taxon>
        <taxon>Bacillales</taxon>
        <taxon>Staphylococcaceae</taxon>
        <taxon>Staphylococcus</taxon>
    </lineage>
</organism>
<proteinExistence type="evidence at protein level"/>
<accession>Q6GH13</accession>
<sequence length="295" mass="32481">MTHLFEGVGVALTTPFTNNKVNLEALKAHVNFLLENNAQAIIVNGTTAESPTLTTDEKELILKTVIDLVDKRVPVIAGTGTNDTEKSIQASIQAKALGADAIMLITPYYNKTNQRGLVKHFEAIADAVKLPVVLYNVPSRTNMTIEPETVEILSQHPYIVALKDATNDFEYLEEVKKRIDTNSFALYSGNDDNVVEYYQRGGQGVISVIANVIPKEFQALYDAQQSGLDIQDQFKPIGTLLSALSVDINPIPIKALTSYLGFGNYELRLPLVSLEDTDTKVLREAYDTFKAGENE</sequence>
<feature type="initiator methionine" description="Removed" evidence="3">
    <location>
        <position position="1"/>
    </location>
</feature>
<feature type="chain" id="PRO_0000103157" description="4-hydroxy-tetrahydrodipicolinate synthase">
    <location>
        <begin position="2"/>
        <end position="295"/>
    </location>
</feature>
<feature type="active site" description="Proton donor/acceptor" evidence="1">
    <location>
        <position position="135"/>
    </location>
</feature>
<feature type="active site" description="Schiff-base intermediate with substrate" evidence="1">
    <location>
        <position position="163"/>
    </location>
</feature>
<feature type="binding site" evidence="1">
    <location>
        <position position="47"/>
    </location>
    <ligand>
        <name>pyruvate</name>
        <dbReference type="ChEBI" id="CHEBI:15361"/>
    </ligand>
</feature>
<feature type="binding site" evidence="1">
    <location>
        <position position="206"/>
    </location>
    <ligand>
        <name>pyruvate</name>
        <dbReference type="ChEBI" id="CHEBI:15361"/>
    </ligand>
</feature>
<feature type="site" description="Part of a proton relay during catalysis" evidence="1">
    <location>
        <position position="46"/>
    </location>
</feature>
<feature type="site" description="Part of a proton relay during catalysis" evidence="1">
    <location>
        <position position="109"/>
    </location>
</feature>
<feature type="strand" evidence="5">
    <location>
        <begin position="7"/>
        <end position="11"/>
    </location>
</feature>
<feature type="helix" evidence="5">
    <location>
        <begin position="23"/>
        <end position="35"/>
    </location>
</feature>
<feature type="strand" evidence="5">
    <location>
        <begin position="40"/>
        <end position="45"/>
    </location>
</feature>
<feature type="helix" evidence="5">
    <location>
        <begin position="46"/>
        <end position="48"/>
    </location>
</feature>
<feature type="helix" evidence="5">
    <location>
        <begin position="50"/>
        <end position="52"/>
    </location>
</feature>
<feature type="helix" evidence="5">
    <location>
        <begin position="55"/>
        <end position="69"/>
    </location>
</feature>
<feature type="strand" evidence="5">
    <location>
        <begin position="75"/>
        <end position="78"/>
    </location>
</feature>
<feature type="helix" evidence="5">
    <location>
        <begin position="84"/>
        <end position="97"/>
    </location>
</feature>
<feature type="strand" evidence="5">
    <location>
        <begin position="100"/>
        <end position="105"/>
    </location>
</feature>
<feature type="helix" evidence="5">
    <location>
        <begin position="114"/>
        <end position="128"/>
    </location>
</feature>
<feature type="strand" evidence="5">
    <location>
        <begin position="132"/>
        <end position="136"/>
    </location>
</feature>
<feature type="helix" evidence="5">
    <location>
        <begin position="138"/>
        <end position="141"/>
    </location>
</feature>
<feature type="helix" evidence="5">
    <location>
        <begin position="147"/>
        <end position="154"/>
    </location>
</feature>
<feature type="strand" evidence="5">
    <location>
        <begin position="159"/>
        <end position="164"/>
    </location>
</feature>
<feature type="helix" evidence="5">
    <location>
        <begin position="169"/>
        <end position="176"/>
    </location>
</feature>
<feature type="turn" evidence="5">
    <location>
        <begin position="181"/>
        <end position="183"/>
    </location>
</feature>
<feature type="strand" evidence="5">
    <location>
        <begin position="184"/>
        <end position="189"/>
    </location>
</feature>
<feature type="helix" evidence="5">
    <location>
        <begin position="191"/>
        <end position="193"/>
    </location>
</feature>
<feature type="helix" evidence="5">
    <location>
        <begin position="194"/>
        <end position="199"/>
    </location>
</feature>
<feature type="strand" evidence="5">
    <location>
        <begin position="204"/>
        <end position="208"/>
    </location>
</feature>
<feature type="helix" evidence="5">
    <location>
        <begin position="209"/>
        <end position="211"/>
    </location>
</feature>
<feature type="helix" evidence="5">
    <location>
        <begin position="214"/>
        <end position="225"/>
    </location>
</feature>
<feature type="helix" evidence="5">
    <location>
        <begin position="231"/>
        <end position="244"/>
    </location>
</feature>
<feature type="turn" evidence="5">
    <location>
        <begin position="249"/>
        <end position="252"/>
    </location>
</feature>
<feature type="helix" evidence="5">
    <location>
        <begin position="253"/>
        <end position="259"/>
    </location>
</feature>
<feature type="strand" evidence="5">
    <location>
        <begin position="262"/>
        <end position="265"/>
    </location>
</feature>
<feature type="helix" evidence="5">
    <location>
        <begin position="276"/>
        <end position="292"/>
    </location>
</feature>
<gene>
    <name evidence="1" type="primary">dapA</name>
    <name type="ordered locus">SAR1407</name>
</gene>
<name>DAPA_STAAR</name>
<dbReference type="EC" id="4.3.3.7" evidence="1"/>
<dbReference type="EMBL" id="BX571856">
    <property type="protein sequence ID" value="CAG40404.1"/>
    <property type="molecule type" value="Genomic_DNA"/>
</dbReference>
<dbReference type="RefSeq" id="WP_000149267.1">
    <property type="nucleotide sequence ID" value="NC_002952.2"/>
</dbReference>
<dbReference type="PDB" id="3DAQ">
    <property type="method" value="X-ray"/>
    <property type="resolution" value="1.45 A"/>
    <property type="chains" value="A/B/C/D=2-293"/>
</dbReference>
<dbReference type="PDBsum" id="3DAQ"/>
<dbReference type="SMR" id="Q6GH13"/>
<dbReference type="KEGG" id="sar:SAR1407"/>
<dbReference type="HOGENOM" id="CLU_049343_7_0_9"/>
<dbReference type="BRENDA" id="4.3.3.7">
    <property type="organism ID" value="3352"/>
</dbReference>
<dbReference type="UniPathway" id="UPA00034">
    <property type="reaction ID" value="UER00017"/>
</dbReference>
<dbReference type="EvolutionaryTrace" id="Q6GH13"/>
<dbReference type="Proteomes" id="UP000000596">
    <property type="component" value="Chromosome"/>
</dbReference>
<dbReference type="GO" id="GO:0005829">
    <property type="term" value="C:cytosol"/>
    <property type="evidence" value="ECO:0007669"/>
    <property type="project" value="TreeGrafter"/>
</dbReference>
<dbReference type="GO" id="GO:0008840">
    <property type="term" value="F:4-hydroxy-tetrahydrodipicolinate synthase activity"/>
    <property type="evidence" value="ECO:0007669"/>
    <property type="project" value="UniProtKB-UniRule"/>
</dbReference>
<dbReference type="GO" id="GO:0019877">
    <property type="term" value="P:diaminopimelate biosynthetic process"/>
    <property type="evidence" value="ECO:0007669"/>
    <property type="project" value="UniProtKB-UniRule"/>
</dbReference>
<dbReference type="GO" id="GO:0009089">
    <property type="term" value="P:lysine biosynthetic process via diaminopimelate"/>
    <property type="evidence" value="ECO:0007669"/>
    <property type="project" value="UniProtKB-UniRule"/>
</dbReference>
<dbReference type="CDD" id="cd00950">
    <property type="entry name" value="DHDPS"/>
    <property type="match status" value="1"/>
</dbReference>
<dbReference type="Gene3D" id="3.20.20.70">
    <property type="entry name" value="Aldolase class I"/>
    <property type="match status" value="1"/>
</dbReference>
<dbReference type="HAMAP" id="MF_00418">
    <property type="entry name" value="DapA"/>
    <property type="match status" value="1"/>
</dbReference>
<dbReference type="InterPro" id="IPR013785">
    <property type="entry name" value="Aldolase_TIM"/>
</dbReference>
<dbReference type="InterPro" id="IPR005263">
    <property type="entry name" value="DapA"/>
</dbReference>
<dbReference type="InterPro" id="IPR002220">
    <property type="entry name" value="DapA-like"/>
</dbReference>
<dbReference type="InterPro" id="IPR020625">
    <property type="entry name" value="Schiff_base-form_aldolases_AS"/>
</dbReference>
<dbReference type="NCBIfam" id="TIGR00674">
    <property type="entry name" value="dapA"/>
    <property type="match status" value="1"/>
</dbReference>
<dbReference type="PANTHER" id="PTHR12128:SF66">
    <property type="entry name" value="4-HYDROXY-2-OXOGLUTARATE ALDOLASE, MITOCHONDRIAL"/>
    <property type="match status" value="1"/>
</dbReference>
<dbReference type="PANTHER" id="PTHR12128">
    <property type="entry name" value="DIHYDRODIPICOLINATE SYNTHASE"/>
    <property type="match status" value="1"/>
</dbReference>
<dbReference type="Pfam" id="PF00701">
    <property type="entry name" value="DHDPS"/>
    <property type="match status" value="1"/>
</dbReference>
<dbReference type="PIRSF" id="PIRSF001365">
    <property type="entry name" value="DHDPS"/>
    <property type="match status" value="1"/>
</dbReference>
<dbReference type="PRINTS" id="PR00146">
    <property type="entry name" value="DHPICSNTHASE"/>
</dbReference>
<dbReference type="SMART" id="SM01130">
    <property type="entry name" value="DHDPS"/>
    <property type="match status" value="1"/>
</dbReference>
<dbReference type="SUPFAM" id="SSF51569">
    <property type="entry name" value="Aldolase"/>
    <property type="match status" value="1"/>
</dbReference>
<dbReference type="PROSITE" id="PS00666">
    <property type="entry name" value="DHDPS_2"/>
    <property type="match status" value="1"/>
</dbReference>
<reference key="1">
    <citation type="journal article" date="2004" name="Proc. Natl. Acad. Sci. U.S.A.">
        <title>Complete genomes of two clinical Staphylococcus aureus strains: evidence for the rapid evolution of virulence and drug resistance.</title>
        <authorList>
            <person name="Holden M.T.G."/>
            <person name="Feil E.J."/>
            <person name="Lindsay J.A."/>
            <person name="Peacock S.J."/>
            <person name="Day N.P.J."/>
            <person name="Enright M.C."/>
            <person name="Foster T.J."/>
            <person name="Moore C.E."/>
            <person name="Hurst L."/>
            <person name="Atkin R."/>
            <person name="Barron A."/>
            <person name="Bason N."/>
            <person name="Bentley S.D."/>
            <person name="Chillingworth C."/>
            <person name="Chillingworth T."/>
            <person name="Churcher C."/>
            <person name="Clark L."/>
            <person name="Corton C."/>
            <person name="Cronin A."/>
            <person name="Doggett J."/>
            <person name="Dowd L."/>
            <person name="Feltwell T."/>
            <person name="Hance Z."/>
            <person name="Harris B."/>
            <person name="Hauser H."/>
            <person name="Holroyd S."/>
            <person name="Jagels K."/>
            <person name="James K.D."/>
            <person name="Lennard N."/>
            <person name="Line A."/>
            <person name="Mayes R."/>
            <person name="Moule S."/>
            <person name="Mungall K."/>
            <person name="Ormond D."/>
            <person name="Quail M.A."/>
            <person name="Rabbinowitsch E."/>
            <person name="Rutherford K.M."/>
            <person name="Sanders M."/>
            <person name="Sharp S."/>
            <person name="Simmonds M."/>
            <person name="Stevens K."/>
            <person name="Whitehead S."/>
            <person name="Barrell B.G."/>
            <person name="Spratt B.G."/>
            <person name="Parkhill J."/>
        </authorList>
    </citation>
    <scope>NUCLEOTIDE SEQUENCE [LARGE SCALE GENOMIC DNA]</scope>
    <source>
        <strain>MRSA252</strain>
    </source>
</reference>
<reference key="2">
    <citation type="journal article" date="2008" name="Acta Crystallogr. F">
        <title>Purification, crystallization and preliminary X-ray diffraction studies to near-atomic resolution of dihydrodipicolinate synthase from methicillin-resistant Staphylococcus aureus.</title>
        <authorList>
            <person name="Burgess B.R."/>
            <person name="Dobson R.C."/>
            <person name="Dogovski C."/>
            <person name="Jameson G.B."/>
            <person name="Parker M.W."/>
            <person name="Perugini M.A."/>
        </authorList>
    </citation>
    <scope>CRYSTALLIZATION</scope>
    <source>
        <strain>MRSA252</strain>
    </source>
</reference>
<reference key="3">
    <citation type="journal article" date="2008" name="J. Biol. Chem.">
        <title>Structure and evolution of a novel dimeric enzyme from a clinically important bacterial pathogen.</title>
        <authorList>
            <person name="Burgess B.R."/>
            <person name="Dobson R.C."/>
            <person name="Bailey M.F."/>
            <person name="Atkinson S.C."/>
            <person name="Griffin M.D."/>
            <person name="Jameson G.B."/>
            <person name="Parker M.W."/>
            <person name="Gerrard J.A."/>
            <person name="Perugini M.A."/>
        </authorList>
    </citation>
    <scope>X-RAY CRYSTALLOGRAPHY (1.45 ANGSTROMS) OF 2-293</scope>
    <scope>FUNCTION</scope>
    <scope>KINETIC PARAMETERS</scope>
    <scope>ACTIVITY REGULATION</scope>
    <scope>MASS SPECTROMETRY</scope>
    <scope>SUBUNIT</scope>
    <source>
        <strain>MRSA252</strain>
    </source>
</reference>
<evidence type="ECO:0000255" key="1">
    <source>
        <dbReference type="HAMAP-Rule" id="MF_00418"/>
    </source>
</evidence>
<evidence type="ECO:0000269" key="2">
    <source>
    </source>
</evidence>
<evidence type="ECO:0000305" key="3"/>
<evidence type="ECO:0000305" key="4">
    <source>
    </source>
</evidence>
<evidence type="ECO:0007829" key="5">
    <source>
        <dbReference type="PDB" id="3DAQ"/>
    </source>
</evidence>